<keyword id="KW-0560">Oxidoreductase</keyword>
<keyword id="KW-1185">Reference proteome</keyword>
<protein>
    <recommendedName>
        <fullName evidence="1">Peptide methionine sulfoxide reductase MsrA</fullName>
        <shortName evidence="1">Protein-methionine-S-oxide reductase</shortName>
        <ecNumber evidence="1">1.8.4.11</ecNumber>
    </recommendedName>
    <alternativeName>
        <fullName evidence="1">Peptide-methionine (S)-S-oxide reductase</fullName>
        <shortName evidence="1">Peptide Met(O) reductase</shortName>
    </alternativeName>
</protein>
<dbReference type="EC" id="1.8.4.11" evidence="1"/>
<dbReference type="EMBL" id="CP000115">
    <property type="protein sequence ID" value="ABA04233.1"/>
    <property type="molecule type" value="Genomic_DNA"/>
</dbReference>
<dbReference type="RefSeq" id="WP_011314274.1">
    <property type="nucleotide sequence ID" value="NC_007406.1"/>
</dbReference>
<dbReference type="SMR" id="Q3SU08"/>
<dbReference type="STRING" id="323098.Nwi_0971"/>
<dbReference type="KEGG" id="nwi:Nwi_0971"/>
<dbReference type="eggNOG" id="COG0225">
    <property type="taxonomic scope" value="Bacteria"/>
</dbReference>
<dbReference type="HOGENOM" id="CLU_031040_10_2_5"/>
<dbReference type="OrthoDB" id="4174719at2"/>
<dbReference type="Proteomes" id="UP000002531">
    <property type="component" value="Chromosome"/>
</dbReference>
<dbReference type="GO" id="GO:0033744">
    <property type="term" value="F:L-methionine:thioredoxin-disulfide S-oxidoreductase activity"/>
    <property type="evidence" value="ECO:0007669"/>
    <property type="project" value="RHEA"/>
</dbReference>
<dbReference type="GO" id="GO:0008113">
    <property type="term" value="F:peptide-methionine (S)-S-oxide reductase activity"/>
    <property type="evidence" value="ECO:0007669"/>
    <property type="project" value="UniProtKB-UniRule"/>
</dbReference>
<dbReference type="GO" id="GO:0036211">
    <property type="term" value="P:protein modification process"/>
    <property type="evidence" value="ECO:0007669"/>
    <property type="project" value="UniProtKB-UniRule"/>
</dbReference>
<dbReference type="FunFam" id="3.30.1060.10:FF:000005">
    <property type="entry name" value="Peptide methionine sulfoxide reductase MsrA"/>
    <property type="match status" value="1"/>
</dbReference>
<dbReference type="Gene3D" id="3.30.1060.10">
    <property type="entry name" value="Peptide methionine sulphoxide reductase MsrA"/>
    <property type="match status" value="1"/>
</dbReference>
<dbReference type="HAMAP" id="MF_01401">
    <property type="entry name" value="MsrA"/>
    <property type="match status" value="1"/>
</dbReference>
<dbReference type="InterPro" id="IPR002569">
    <property type="entry name" value="Met_Sox_Rdtase_MsrA_dom"/>
</dbReference>
<dbReference type="InterPro" id="IPR036509">
    <property type="entry name" value="Met_Sox_Rdtase_MsrA_sf"/>
</dbReference>
<dbReference type="NCBIfam" id="TIGR00401">
    <property type="entry name" value="msrA"/>
    <property type="match status" value="1"/>
</dbReference>
<dbReference type="PANTHER" id="PTHR43774">
    <property type="entry name" value="PEPTIDE METHIONINE SULFOXIDE REDUCTASE"/>
    <property type="match status" value="1"/>
</dbReference>
<dbReference type="PANTHER" id="PTHR43774:SF1">
    <property type="entry name" value="PEPTIDE METHIONINE SULFOXIDE REDUCTASE MSRA 2"/>
    <property type="match status" value="1"/>
</dbReference>
<dbReference type="Pfam" id="PF01625">
    <property type="entry name" value="PMSR"/>
    <property type="match status" value="1"/>
</dbReference>
<dbReference type="SUPFAM" id="SSF55068">
    <property type="entry name" value="Peptide methionine sulfoxide reductase"/>
    <property type="match status" value="1"/>
</dbReference>
<sequence length="179" mass="20225">MTVSTERAVLAGGCFWGMQALLRRYPGVISTRVGYTGGDVPDATYRNHGDHAEAIEVNFDPTVTSYRQLLEFFFQIHDPTTEDRQGYDQGLSYRSAIFYTNEEQKRIAEETIAEIDASGLWPGYVVTDVEPAGPFWEAEPEHQDYLERVPNGYTCHFVRPNWKLPRKQDAGQTAAGGDR</sequence>
<evidence type="ECO:0000255" key="1">
    <source>
        <dbReference type="HAMAP-Rule" id="MF_01401"/>
    </source>
</evidence>
<name>MSRA_NITWN</name>
<gene>
    <name evidence="1" type="primary">msrA</name>
    <name type="ordered locus">Nwi_0971</name>
</gene>
<comment type="function">
    <text evidence="1">Has an important function as a repair enzyme for proteins that have been inactivated by oxidation. Catalyzes the reversible oxidation-reduction of methionine sulfoxide in proteins to methionine.</text>
</comment>
<comment type="catalytic activity">
    <reaction evidence="1">
        <text>L-methionyl-[protein] + [thioredoxin]-disulfide + H2O = L-methionyl-(S)-S-oxide-[protein] + [thioredoxin]-dithiol</text>
        <dbReference type="Rhea" id="RHEA:14217"/>
        <dbReference type="Rhea" id="RHEA-COMP:10698"/>
        <dbReference type="Rhea" id="RHEA-COMP:10700"/>
        <dbReference type="Rhea" id="RHEA-COMP:12313"/>
        <dbReference type="Rhea" id="RHEA-COMP:12315"/>
        <dbReference type="ChEBI" id="CHEBI:15377"/>
        <dbReference type="ChEBI" id="CHEBI:16044"/>
        <dbReference type="ChEBI" id="CHEBI:29950"/>
        <dbReference type="ChEBI" id="CHEBI:44120"/>
        <dbReference type="ChEBI" id="CHEBI:50058"/>
        <dbReference type="EC" id="1.8.4.11"/>
    </reaction>
</comment>
<comment type="catalytic activity">
    <reaction evidence="1">
        <text>[thioredoxin]-disulfide + L-methionine + H2O = L-methionine (S)-S-oxide + [thioredoxin]-dithiol</text>
        <dbReference type="Rhea" id="RHEA:19993"/>
        <dbReference type="Rhea" id="RHEA-COMP:10698"/>
        <dbReference type="Rhea" id="RHEA-COMP:10700"/>
        <dbReference type="ChEBI" id="CHEBI:15377"/>
        <dbReference type="ChEBI" id="CHEBI:29950"/>
        <dbReference type="ChEBI" id="CHEBI:50058"/>
        <dbReference type="ChEBI" id="CHEBI:57844"/>
        <dbReference type="ChEBI" id="CHEBI:58772"/>
        <dbReference type="EC" id="1.8.4.11"/>
    </reaction>
</comment>
<comment type="similarity">
    <text evidence="1">Belongs to the MsrA Met sulfoxide reductase family.</text>
</comment>
<accession>Q3SU08</accession>
<feature type="chain" id="PRO_1000068346" description="Peptide methionine sulfoxide reductase MsrA">
    <location>
        <begin position="1"/>
        <end position="179"/>
    </location>
</feature>
<feature type="active site" evidence="1">
    <location>
        <position position="14"/>
    </location>
</feature>
<proteinExistence type="inferred from homology"/>
<organism>
    <name type="scientific">Nitrobacter winogradskyi (strain ATCC 25391 / DSM 10237 / CIP 104748 / NCIMB 11846 / Nb-255)</name>
    <dbReference type="NCBI Taxonomy" id="323098"/>
    <lineage>
        <taxon>Bacteria</taxon>
        <taxon>Pseudomonadati</taxon>
        <taxon>Pseudomonadota</taxon>
        <taxon>Alphaproteobacteria</taxon>
        <taxon>Hyphomicrobiales</taxon>
        <taxon>Nitrobacteraceae</taxon>
        <taxon>Nitrobacter</taxon>
    </lineage>
</organism>
<reference key="1">
    <citation type="journal article" date="2006" name="Appl. Environ. Microbiol.">
        <title>Genome sequence of the chemolithoautotrophic nitrite-oxidizing bacterium Nitrobacter winogradskyi Nb-255.</title>
        <authorList>
            <person name="Starkenburg S.R."/>
            <person name="Chain P.S.G."/>
            <person name="Sayavedra-Soto L.A."/>
            <person name="Hauser L."/>
            <person name="Land M.L."/>
            <person name="Larimer F.W."/>
            <person name="Malfatti S.A."/>
            <person name="Klotz M.G."/>
            <person name="Bottomley P.J."/>
            <person name="Arp D.J."/>
            <person name="Hickey W.J."/>
        </authorList>
    </citation>
    <scope>NUCLEOTIDE SEQUENCE [LARGE SCALE GENOMIC DNA]</scope>
    <source>
        <strain>ATCC 25391 / DSM 10237 / CIP 104748 / NCIMB 11846 / Nb-255</strain>
    </source>
</reference>